<feature type="chain" id="PRO_0000275607" description="NAD(P)H-quinone oxidoreductase subunit 2 A, chloroplastic">
    <location>
        <begin position="1"/>
        <end position="510"/>
    </location>
</feature>
<feature type="transmembrane region" description="Helical" evidence="1">
    <location>
        <begin position="24"/>
        <end position="44"/>
    </location>
</feature>
<feature type="transmembrane region" description="Helical" evidence="1">
    <location>
        <begin position="57"/>
        <end position="77"/>
    </location>
</feature>
<feature type="transmembrane region" description="Helical" evidence="1">
    <location>
        <begin position="99"/>
        <end position="119"/>
    </location>
</feature>
<feature type="transmembrane region" description="Helical" evidence="1">
    <location>
        <begin position="124"/>
        <end position="144"/>
    </location>
</feature>
<feature type="transmembrane region" description="Helical" evidence="1">
    <location>
        <begin position="149"/>
        <end position="169"/>
    </location>
</feature>
<feature type="transmembrane region" description="Helical" evidence="1">
    <location>
        <begin position="183"/>
        <end position="203"/>
    </location>
</feature>
<feature type="transmembrane region" description="Helical" evidence="1">
    <location>
        <begin position="227"/>
        <end position="247"/>
    </location>
</feature>
<feature type="transmembrane region" description="Helical" evidence="1">
    <location>
        <begin position="295"/>
        <end position="315"/>
    </location>
</feature>
<feature type="transmembrane region" description="Helical" evidence="1">
    <location>
        <begin position="323"/>
        <end position="343"/>
    </location>
</feature>
<feature type="transmembrane region" description="Helical" evidence="1">
    <location>
        <begin position="354"/>
        <end position="374"/>
    </location>
</feature>
<feature type="transmembrane region" description="Helical" evidence="1">
    <location>
        <begin position="395"/>
        <end position="415"/>
    </location>
</feature>
<feature type="transmembrane region" description="Helical" evidence="1">
    <location>
        <begin position="418"/>
        <end position="438"/>
    </location>
</feature>
<feature type="transmembrane region" description="Helical" evidence="1">
    <location>
        <begin position="484"/>
        <end position="504"/>
    </location>
</feature>
<protein>
    <recommendedName>
        <fullName evidence="1">NAD(P)H-quinone oxidoreductase subunit 2 A, chloroplastic</fullName>
        <ecNumber evidence="1">7.1.1.-</ecNumber>
    </recommendedName>
    <alternativeName>
        <fullName evidence="1">NAD(P)H dehydrogenase, subunit 2 A</fullName>
    </alternativeName>
    <alternativeName>
        <fullName evidence="1">NADH-plastoquinone oxidoreductase subunit 2 A</fullName>
    </alternativeName>
</protein>
<gene>
    <name evidence="1" type="primary">ndhB1</name>
</gene>
<keyword id="KW-0150">Chloroplast</keyword>
<keyword id="KW-0472">Membrane</keyword>
<keyword id="KW-0520">NAD</keyword>
<keyword id="KW-0521">NADP</keyword>
<keyword id="KW-0934">Plastid</keyword>
<keyword id="KW-0618">Plastoquinone</keyword>
<keyword id="KW-0874">Quinone</keyword>
<keyword id="KW-1185">Reference proteome</keyword>
<keyword id="KW-0793">Thylakoid</keyword>
<keyword id="KW-1278">Translocase</keyword>
<keyword id="KW-0812">Transmembrane</keyword>
<keyword id="KW-1133">Transmembrane helix</keyword>
<keyword id="KW-0813">Transport</keyword>
<comment type="function">
    <text evidence="1">NDH shuttles electrons from NAD(P)H:plastoquinone, via FMN and iron-sulfur (Fe-S) centers, to quinones in the photosynthetic chain and possibly in a chloroplast respiratory chain. The immediate electron acceptor for the enzyme in this species is believed to be plastoquinone. Couples the redox reaction to proton translocation, and thus conserves the redox energy in a proton gradient.</text>
</comment>
<comment type="catalytic activity">
    <reaction evidence="1">
        <text>a plastoquinone + NADH + (n+1) H(+)(in) = a plastoquinol + NAD(+) + n H(+)(out)</text>
        <dbReference type="Rhea" id="RHEA:42608"/>
        <dbReference type="Rhea" id="RHEA-COMP:9561"/>
        <dbReference type="Rhea" id="RHEA-COMP:9562"/>
        <dbReference type="ChEBI" id="CHEBI:15378"/>
        <dbReference type="ChEBI" id="CHEBI:17757"/>
        <dbReference type="ChEBI" id="CHEBI:57540"/>
        <dbReference type="ChEBI" id="CHEBI:57945"/>
        <dbReference type="ChEBI" id="CHEBI:62192"/>
    </reaction>
</comment>
<comment type="catalytic activity">
    <reaction evidence="1">
        <text>a plastoquinone + NADPH + (n+1) H(+)(in) = a plastoquinol + NADP(+) + n H(+)(out)</text>
        <dbReference type="Rhea" id="RHEA:42612"/>
        <dbReference type="Rhea" id="RHEA-COMP:9561"/>
        <dbReference type="Rhea" id="RHEA-COMP:9562"/>
        <dbReference type="ChEBI" id="CHEBI:15378"/>
        <dbReference type="ChEBI" id="CHEBI:17757"/>
        <dbReference type="ChEBI" id="CHEBI:57783"/>
        <dbReference type="ChEBI" id="CHEBI:58349"/>
        <dbReference type="ChEBI" id="CHEBI:62192"/>
    </reaction>
</comment>
<comment type="subunit">
    <text evidence="1">NDH is composed of at least 16 different subunits, 5 of which are encoded in the nucleus.</text>
</comment>
<comment type="subcellular location">
    <subcellularLocation>
        <location evidence="1">Plastid</location>
        <location evidence="1">Chloroplast thylakoid membrane</location>
        <topology evidence="1">Multi-pass membrane protein</topology>
    </subcellularLocation>
</comment>
<comment type="similarity">
    <text evidence="1">Belongs to the complex I subunit 2 family.</text>
</comment>
<accession>P0CD46</accession>
<accession>Q2MI40</accession>
<evidence type="ECO:0000255" key="1">
    <source>
        <dbReference type="HAMAP-Rule" id="MF_00445"/>
    </source>
</evidence>
<sequence length="510" mass="56644">MIWHVQNENFILDSTRIFMKAFHLLLFDGSLIFPECILIFGLILLLMIDSTSDQKDIPWLYFISSTSLVMSITALLFRWREEPMISFSGNFQTNNFNEIFQFLILLCSTLCIPLSVEYIECTEMAITEFLLFVLTATLGGMFLCGANDLITIFVAPECFSLCSYLLSGYTKKDVRSNEATMKYLLMGGASSSILVHGFSWLYGSSGGEIELQEIVNGLINTQMYNSPGISIALIFITVGIGFKLSPAPSHQWTPDVYEGSPTPVVAFLSVTSKVAASASATRIFNIPFYFSSNEWHLLLEILAILSMILGNLIAITQTSMKRMLAYSSIGQIGYVIIGIIVGDSNDGYASMITYMLFYISMNLGTFACIVLFGLRTGTDNIRDYAGLYTKDPFLALSLALCLLSLGGLPPLAGFFGKLYLFWCGWQAGLYFLVLIGLLTSVVSIYYYLKIIKLLMTGRNQEITPHVRNYRRSPLRSNNSIELSMIVCVIASTIPGISMNPIIAIAQDSLF</sequence>
<name>NU2C1_SOLLC</name>
<organism>
    <name type="scientific">Solanum lycopersicum</name>
    <name type="common">Tomato</name>
    <name type="synonym">Lycopersicon esculentum</name>
    <dbReference type="NCBI Taxonomy" id="4081"/>
    <lineage>
        <taxon>Eukaryota</taxon>
        <taxon>Viridiplantae</taxon>
        <taxon>Streptophyta</taxon>
        <taxon>Embryophyta</taxon>
        <taxon>Tracheophyta</taxon>
        <taxon>Spermatophyta</taxon>
        <taxon>Magnoliopsida</taxon>
        <taxon>eudicotyledons</taxon>
        <taxon>Gunneridae</taxon>
        <taxon>Pentapetalae</taxon>
        <taxon>asterids</taxon>
        <taxon>lamiids</taxon>
        <taxon>Solanales</taxon>
        <taxon>Solanaceae</taxon>
        <taxon>Solanoideae</taxon>
        <taxon>Solaneae</taxon>
        <taxon>Solanum</taxon>
        <taxon>Solanum subgen. Lycopersicon</taxon>
    </lineage>
</organism>
<proteinExistence type="inferred from homology"/>
<dbReference type="EC" id="7.1.1.-" evidence="1"/>
<dbReference type="EMBL" id="DQ347959">
    <property type="protein sequence ID" value="ABC56345.1"/>
    <property type="molecule type" value="Genomic_DNA"/>
</dbReference>
<dbReference type="EMBL" id="AM087200">
    <property type="protein sequence ID" value="CAJ32439.1"/>
    <property type="molecule type" value="Genomic_DNA"/>
</dbReference>
<dbReference type="RefSeq" id="AP_004973.1">
    <property type="nucleotide sequence ID" value="AC_000188.1"/>
</dbReference>
<dbReference type="RefSeq" id="AP_004989.1">
    <property type="nucleotide sequence ID" value="AC_000188.1"/>
</dbReference>
<dbReference type="SMR" id="P0CD46"/>
<dbReference type="FunCoup" id="P0CD46">
    <property type="interactions" value="24"/>
</dbReference>
<dbReference type="STRING" id="4081.P0CD46"/>
<dbReference type="PaxDb" id="4081-Solyc01g007660.2.1"/>
<dbReference type="KEGG" id="sly:3950395"/>
<dbReference type="KEGG" id="sly:3950469"/>
<dbReference type="eggNOG" id="KOG4668">
    <property type="taxonomic scope" value="Eukaryota"/>
</dbReference>
<dbReference type="InParanoid" id="P0CD46"/>
<dbReference type="OrthoDB" id="1712451at2759"/>
<dbReference type="Proteomes" id="UP000004994">
    <property type="component" value="Chloroplast"/>
</dbReference>
<dbReference type="ExpressionAtlas" id="P0CD46">
    <property type="expression patterns" value="baseline"/>
</dbReference>
<dbReference type="GO" id="GO:0009535">
    <property type="term" value="C:chloroplast thylakoid membrane"/>
    <property type="evidence" value="ECO:0007669"/>
    <property type="project" value="UniProtKB-SubCell"/>
</dbReference>
<dbReference type="GO" id="GO:0008137">
    <property type="term" value="F:NADH dehydrogenase (ubiquinone) activity"/>
    <property type="evidence" value="ECO:0007669"/>
    <property type="project" value="InterPro"/>
</dbReference>
<dbReference type="GO" id="GO:0048038">
    <property type="term" value="F:quinone binding"/>
    <property type="evidence" value="ECO:0007669"/>
    <property type="project" value="UniProtKB-KW"/>
</dbReference>
<dbReference type="GO" id="GO:0042773">
    <property type="term" value="P:ATP synthesis coupled electron transport"/>
    <property type="evidence" value="ECO:0007669"/>
    <property type="project" value="InterPro"/>
</dbReference>
<dbReference type="GO" id="GO:0019684">
    <property type="term" value="P:photosynthesis, light reaction"/>
    <property type="evidence" value="ECO:0007669"/>
    <property type="project" value="UniProtKB-UniRule"/>
</dbReference>
<dbReference type="HAMAP" id="MF_00445">
    <property type="entry name" value="NDH1_NuoN_1"/>
    <property type="match status" value="1"/>
</dbReference>
<dbReference type="InterPro" id="IPR010096">
    <property type="entry name" value="NADH-Q_OxRdtase_suN/2"/>
</dbReference>
<dbReference type="InterPro" id="IPR001750">
    <property type="entry name" value="ND/Mrp_TM"/>
</dbReference>
<dbReference type="InterPro" id="IPR045693">
    <property type="entry name" value="Ndh2_N"/>
</dbReference>
<dbReference type="NCBIfam" id="TIGR01770">
    <property type="entry name" value="NDH_I_N"/>
    <property type="match status" value="1"/>
</dbReference>
<dbReference type="NCBIfam" id="NF002701">
    <property type="entry name" value="PRK02504.1"/>
    <property type="match status" value="1"/>
</dbReference>
<dbReference type="PANTHER" id="PTHR22773">
    <property type="entry name" value="NADH DEHYDROGENASE"/>
    <property type="match status" value="1"/>
</dbReference>
<dbReference type="Pfam" id="PF19530">
    <property type="entry name" value="Ndh2_N"/>
    <property type="match status" value="1"/>
</dbReference>
<dbReference type="Pfam" id="PF00361">
    <property type="entry name" value="Proton_antipo_M"/>
    <property type="match status" value="1"/>
</dbReference>
<dbReference type="PRINTS" id="PR01434">
    <property type="entry name" value="NADHDHGNASE5"/>
</dbReference>
<reference key="1">
    <citation type="journal article" date="2006" name="Theor. Appl. Genet.">
        <title>Complete chloroplast genome sequences of Solanum bulbocastanum, Solanum lycopersicum and comparative analyses with other Solanaceae genomes.</title>
        <authorList>
            <person name="Daniell H."/>
            <person name="Lee S.-B."/>
            <person name="Grevich J."/>
            <person name="Saski C."/>
            <person name="Quesada-Vargas T."/>
            <person name="Guda C."/>
            <person name="Tomkins J."/>
            <person name="Jansen R.K."/>
        </authorList>
    </citation>
    <scope>NUCLEOTIDE SEQUENCE [LARGE SCALE GENOMIC DNA]</scope>
    <source>
        <strain>cv. LA3023</strain>
    </source>
</reference>
<reference key="2">
    <citation type="journal article" date="2006" name="J. Mol. Evol.">
        <title>Sequence of the tomato chloroplast DNA and evolutionary comparison of solanaceous plastid genomes.</title>
        <authorList>
            <person name="Kahlau S."/>
            <person name="Aspinall S."/>
            <person name="Gray J.C."/>
            <person name="Bock R."/>
        </authorList>
    </citation>
    <scope>NUCLEOTIDE SEQUENCE [LARGE SCALE GENOMIC DNA]</scope>
    <source>
        <strain>cv. IPA-6</strain>
    </source>
</reference>
<geneLocation type="chloroplast"/>